<proteinExistence type="inferred from homology"/>
<accession>A4QLI1</accession>
<name>ATPH_LOBMA</name>
<reference key="1">
    <citation type="submission" date="2007-03" db="EMBL/GenBank/DDBJ databases">
        <title>Sequencing analysis of Lobularia maritima chloroplast DNA.</title>
        <authorList>
            <person name="Hosouchi T."/>
            <person name="Tsuruoka H."/>
            <person name="Kotani H."/>
        </authorList>
    </citation>
    <scope>NUCLEOTIDE SEQUENCE [LARGE SCALE GENOMIC DNA]</scope>
</reference>
<geneLocation type="chloroplast"/>
<organism>
    <name type="scientific">Lobularia maritima</name>
    <name type="common">Sweet alyssum</name>
    <name type="synonym">Alyssum maritimum</name>
    <dbReference type="NCBI Taxonomy" id="226051"/>
    <lineage>
        <taxon>Eukaryota</taxon>
        <taxon>Viridiplantae</taxon>
        <taxon>Streptophyta</taxon>
        <taxon>Embryophyta</taxon>
        <taxon>Tracheophyta</taxon>
        <taxon>Spermatophyta</taxon>
        <taxon>Magnoliopsida</taxon>
        <taxon>eudicotyledons</taxon>
        <taxon>Gunneridae</taxon>
        <taxon>Pentapetalae</taxon>
        <taxon>rosids</taxon>
        <taxon>malvids</taxon>
        <taxon>Brassicales</taxon>
        <taxon>Brassicaceae</taxon>
        <taxon>Anastaticeae</taxon>
        <taxon>Lobularia</taxon>
    </lineage>
</organism>
<dbReference type="EMBL" id="AP009375">
    <property type="protein sequence ID" value="BAF50536.1"/>
    <property type="molecule type" value="Genomic_DNA"/>
</dbReference>
<dbReference type="RefSeq" id="YP_001123712.1">
    <property type="nucleotide sequence ID" value="NC_009274.1"/>
</dbReference>
<dbReference type="SMR" id="A4QLI1"/>
<dbReference type="GeneID" id="4964809"/>
<dbReference type="GO" id="GO:0009535">
    <property type="term" value="C:chloroplast thylakoid membrane"/>
    <property type="evidence" value="ECO:0007669"/>
    <property type="project" value="UniProtKB-SubCell"/>
</dbReference>
<dbReference type="GO" id="GO:0045259">
    <property type="term" value="C:proton-transporting ATP synthase complex"/>
    <property type="evidence" value="ECO:0007669"/>
    <property type="project" value="UniProtKB-KW"/>
</dbReference>
<dbReference type="GO" id="GO:0033177">
    <property type="term" value="C:proton-transporting two-sector ATPase complex, proton-transporting domain"/>
    <property type="evidence" value="ECO:0007669"/>
    <property type="project" value="InterPro"/>
</dbReference>
<dbReference type="GO" id="GO:0008289">
    <property type="term" value="F:lipid binding"/>
    <property type="evidence" value="ECO:0007669"/>
    <property type="project" value="UniProtKB-KW"/>
</dbReference>
<dbReference type="GO" id="GO:0046933">
    <property type="term" value="F:proton-transporting ATP synthase activity, rotational mechanism"/>
    <property type="evidence" value="ECO:0007669"/>
    <property type="project" value="UniProtKB-UniRule"/>
</dbReference>
<dbReference type="CDD" id="cd18183">
    <property type="entry name" value="ATP-synt_Fo_c_ATPH"/>
    <property type="match status" value="1"/>
</dbReference>
<dbReference type="FunFam" id="1.20.20.10:FF:000001">
    <property type="entry name" value="ATP synthase subunit c, chloroplastic"/>
    <property type="match status" value="1"/>
</dbReference>
<dbReference type="Gene3D" id="1.20.20.10">
    <property type="entry name" value="F1F0 ATP synthase subunit C"/>
    <property type="match status" value="1"/>
</dbReference>
<dbReference type="HAMAP" id="MF_01396">
    <property type="entry name" value="ATP_synth_c_bact"/>
    <property type="match status" value="1"/>
</dbReference>
<dbReference type="InterPro" id="IPR005953">
    <property type="entry name" value="ATP_synth_csu_bac/chlpt"/>
</dbReference>
<dbReference type="InterPro" id="IPR000454">
    <property type="entry name" value="ATP_synth_F0_csu"/>
</dbReference>
<dbReference type="InterPro" id="IPR020537">
    <property type="entry name" value="ATP_synth_F0_csu_DDCD_BS"/>
</dbReference>
<dbReference type="InterPro" id="IPR038662">
    <property type="entry name" value="ATP_synth_F0_csu_sf"/>
</dbReference>
<dbReference type="InterPro" id="IPR002379">
    <property type="entry name" value="ATPase_proteolipid_c-like_dom"/>
</dbReference>
<dbReference type="InterPro" id="IPR035921">
    <property type="entry name" value="F/V-ATP_Csub_sf"/>
</dbReference>
<dbReference type="NCBIfam" id="TIGR01260">
    <property type="entry name" value="ATP_synt_c"/>
    <property type="match status" value="1"/>
</dbReference>
<dbReference type="NCBIfam" id="NF005608">
    <property type="entry name" value="PRK07354.1"/>
    <property type="match status" value="1"/>
</dbReference>
<dbReference type="PANTHER" id="PTHR10031">
    <property type="entry name" value="ATP SYNTHASE LIPID-BINDING PROTEIN, MITOCHONDRIAL"/>
    <property type="match status" value="1"/>
</dbReference>
<dbReference type="PANTHER" id="PTHR10031:SF0">
    <property type="entry name" value="ATPASE PROTEIN 9"/>
    <property type="match status" value="1"/>
</dbReference>
<dbReference type="Pfam" id="PF00137">
    <property type="entry name" value="ATP-synt_C"/>
    <property type="match status" value="1"/>
</dbReference>
<dbReference type="PRINTS" id="PR00124">
    <property type="entry name" value="ATPASEC"/>
</dbReference>
<dbReference type="SUPFAM" id="SSF81333">
    <property type="entry name" value="F1F0 ATP synthase subunit C"/>
    <property type="match status" value="1"/>
</dbReference>
<dbReference type="PROSITE" id="PS00605">
    <property type="entry name" value="ATPASE_C"/>
    <property type="match status" value="1"/>
</dbReference>
<feature type="chain" id="PRO_0000362932" description="ATP synthase subunit c, chloroplastic">
    <location>
        <begin position="1"/>
        <end position="81"/>
    </location>
</feature>
<feature type="transmembrane region" description="Helical" evidence="1">
    <location>
        <begin position="3"/>
        <end position="23"/>
    </location>
</feature>
<feature type="transmembrane region" description="Helical" evidence="1">
    <location>
        <begin position="57"/>
        <end position="77"/>
    </location>
</feature>
<feature type="site" description="Reversibly protonated during proton transport" evidence="1">
    <location>
        <position position="61"/>
    </location>
</feature>
<evidence type="ECO:0000255" key="1">
    <source>
        <dbReference type="HAMAP-Rule" id="MF_01396"/>
    </source>
</evidence>
<keyword id="KW-0066">ATP synthesis</keyword>
<keyword id="KW-0138">CF(0)</keyword>
<keyword id="KW-0150">Chloroplast</keyword>
<keyword id="KW-0375">Hydrogen ion transport</keyword>
<keyword id="KW-0406">Ion transport</keyword>
<keyword id="KW-0446">Lipid-binding</keyword>
<keyword id="KW-0472">Membrane</keyword>
<keyword id="KW-0934">Plastid</keyword>
<keyword id="KW-0793">Thylakoid</keyword>
<keyword id="KW-0812">Transmembrane</keyword>
<keyword id="KW-1133">Transmembrane helix</keyword>
<keyword id="KW-0813">Transport</keyword>
<sequence length="81" mass="7990">MNPLISAASVIAAGLAVGLASIGPGVGQGTAAGQAVEGIARQPEAEGKIRGTLLLSLAFMEALTIYGLVVALALLFANPFV</sequence>
<comment type="function">
    <text evidence="1">F(1)F(0) ATP synthase produces ATP from ADP in the presence of a proton or sodium gradient. F-type ATPases consist of two structural domains, F(1) containing the extramembraneous catalytic core and F(0) containing the membrane proton channel, linked together by a central stalk and a peripheral stalk. During catalysis, ATP synthesis in the catalytic domain of F(1) is coupled via a rotary mechanism of the central stalk subunits to proton translocation.</text>
</comment>
<comment type="function">
    <text evidence="1">Key component of the F(0) channel; it plays a direct role in translocation across the membrane. A homomeric c-ring of between 10-14 subunits forms the central stalk rotor element with the F(1) delta and epsilon subunits.</text>
</comment>
<comment type="subunit">
    <text evidence="1">F-type ATPases have 2 components, F(1) - the catalytic core - and F(0) - the membrane proton channel. F(1) has five subunits: alpha(3), beta(3), gamma(1), delta(1), epsilon(1). F(0) has four main subunits: a(1), b(1), b'(1) and c(10-14). The alpha and beta chains form an alternating ring which encloses part of the gamma chain. F(1) is attached to F(0) by a central stalk formed by the gamma and epsilon chains, while a peripheral stalk is formed by the delta, b and b' chains.</text>
</comment>
<comment type="subcellular location">
    <subcellularLocation>
        <location evidence="1">Plastid</location>
        <location evidence="1">Chloroplast thylakoid membrane</location>
        <topology evidence="1">Multi-pass membrane protein</topology>
    </subcellularLocation>
</comment>
<comment type="miscellaneous">
    <text>In plastids the F-type ATPase is also known as CF(1)CF(0).</text>
</comment>
<comment type="similarity">
    <text evidence="1">Belongs to the ATPase C chain family.</text>
</comment>
<protein>
    <recommendedName>
        <fullName evidence="1">ATP synthase subunit c, chloroplastic</fullName>
    </recommendedName>
    <alternativeName>
        <fullName evidence="1">ATP synthase F(0) sector subunit c</fullName>
    </alternativeName>
    <alternativeName>
        <fullName evidence="1">ATPase subunit III</fullName>
    </alternativeName>
    <alternativeName>
        <fullName evidence="1">F-type ATPase subunit c</fullName>
        <shortName evidence="1">F-ATPase subunit c</shortName>
    </alternativeName>
    <alternativeName>
        <fullName evidence="1">Lipid-binding protein</fullName>
    </alternativeName>
</protein>
<gene>
    <name evidence="1" type="primary">atpH</name>
</gene>